<proteinExistence type="inferred from homology"/>
<keyword id="KW-0479">Metal-binding</keyword>
<keyword id="KW-0507">mRNA processing</keyword>
<keyword id="KW-0539">Nucleus</keyword>
<keyword id="KW-1185">Reference proteome</keyword>
<keyword id="KW-0677">Repeat</keyword>
<keyword id="KW-0694">RNA-binding</keyword>
<keyword id="KW-0862">Zinc</keyword>
<keyword id="KW-0863">Zinc-finger</keyword>
<organism>
    <name type="scientific">Cryptococcus neoformans var. neoformans serotype D (strain JEC21 / ATCC MYA-565)</name>
    <name type="common">Filobasidiella neoformans</name>
    <dbReference type="NCBI Taxonomy" id="214684"/>
    <lineage>
        <taxon>Eukaryota</taxon>
        <taxon>Fungi</taxon>
        <taxon>Dikarya</taxon>
        <taxon>Basidiomycota</taxon>
        <taxon>Agaricomycotina</taxon>
        <taxon>Tremellomycetes</taxon>
        <taxon>Tremellales</taxon>
        <taxon>Cryptococcaceae</taxon>
        <taxon>Cryptococcus</taxon>
        <taxon>Cryptococcus neoformans species complex</taxon>
    </lineage>
</organism>
<protein>
    <recommendedName>
        <fullName>mRNA 3'-end-processing protein YTH1</fullName>
    </recommendedName>
</protein>
<feature type="chain" id="PRO_0000238536" description="mRNA 3'-end-processing protein YTH1">
    <location>
        <begin position="1"/>
        <end position="332"/>
    </location>
</feature>
<feature type="zinc finger region" description="C3H1-type 1" evidence="3">
    <location>
        <begin position="45"/>
        <end position="74"/>
    </location>
</feature>
<feature type="zinc finger region" description="C3H1-type 2" evidence="3">
    <location>
        <begin position="93"/>
        <end position="120"/>
    </location>
</feature>
<feature type="zinc finger region" description="C3H1-type 3" evidence="3">
    <location>
        <begin position="121"/>
        <end position="147"/>
    </location>
</feature>
<feature type="zinc finger region" description="C3H1-type 4" evidence="3">
    <location>
        <begin position="148"/>
        <end position="175"/>
    </location>
</feature>
<feature type="zinc finger region" description="C3H1-type 3" evidence="3">
    <location>
        <begin position="149"/>
        <end position="174"/>
    </location>
</feature>
<feature type="zinc finger region" description="C3H1-type 5" evidence="3">
    <location>
        <begin position="177"/>
        <end position="199"/>
    </location>
</feature>
<feature type="zinc finger region" description="CCHC-type" evidence="2">
    <location>
        <begin position="301"/>
        <end position="318"/>
    </location>
</feature>
<feature type="region of interest" description="Disordered" evidence="4">
    <location>
        <begin position="269"/>
        <end position="293"/>
    </location>
</feature>
<dbReference type="EMBL" id="AE017342">
    <property type="protein sequence ID" value="AAW41806.1"/>
    <property type="molecule type" value="Genomic_DNA"/>
</dbReference>
<dbReference type="RefSeq" id="XP_569113.1">
    <property type="nucleotide sequence ID" value="XM_569113.1"/>
</dbReference>
<dbReference type="STRING" id="214684.P0CS64"/>
<dbReference type="PaxDb" id="214684-P0CS64"/>
<dbReference type="EnsemblFungi" id="AAW41806">
    <property type="protein sequence ID" value="AAW41806"/>
    <property type="gene ID" value="CNB01070"/>
</dbReference>
<dbReference type="GeneID" id="3255804"/>
<dbReference type="KEGG" id="cne:CNB01070"/>
<dbReference type="VEuPathDB" id="FungiDB:CNB01070"/>
<dbReference type="eggNOG" id="KOG1040">
    <property type="taxonomic scope" value="Eukaryota"/>
</dbReference>
<dbReference type="HOGENOM" id="CLU_024513_0_0_1"/>
<dbReference type="InParanoid" id="P0CS64"/>
<dbReference type="OMA" id="EEVTCFK"/>
<dbReference type="OrthoDB" id="1914176at2759"/>
<dbReference type="Proteomes" id="UP000002149">
    <property type="component" value="Chromosome 2"/>
</dbReference>
<dbReference type="GO" id="GO:0005634">
    <property type="term" value="C:nucleus"/>
    <property type="evidence" value="ECO:0007669"/>
    <property type="project" value="UniProtKB-SubCell"/>
</dbReference>
<dbReference type="GO" id="GO:0003723">
    <property type="term" value="F:RNA binding"/>
    <property type="evidence" value="ECO:0007669"/>
    <property type="project" value="UniProtKB-KW"/>
</dbReference>
<dbReference type="GO" id="GO:0008270">
    <property type="term" value="F:zinc ion binding"/>
    <property type="evidence" value="ECO:0007669"/>
    <property type="project" value="UniProtKB-KW"/>
</dbReference>
<dbReference type="GO" id="GO:0006397">
    <property type="term" value="P:mRNA processing"/>
    <property type="evidence" value="ECO:0007669"/>
    <property type="project" value="UniProtKB-KW"/>
</dbReference>
<dbReference type="FunFam" id="4.10.1000.10:FF:000017">
    <property type="entry name" value="Cleavage and polyadenylation specificity factor 30 kDa subunit"/>
    <property type="match status" value="1"/>
</dbReference>
<dbReference type="Gene3D" id="4.10.1000.10">
    <property type="entry name" value="Zinc finger, CCCH-type"/>
    <property type="match status" value="2"/>
</dbReference>
<dbReference type="Gene3D" id="4.10.60.10">
    <property type="entry name" value="Zinc finger, CCHC-type"/>
    <property type="match status" value="1"/>
</dbReference>
<dbReference type="InterPro" id="IPR045348">
    <property type="entry name" value="CPSF4/Yth1"/>
</dbReference>
<dbReference type="InterPro" id="IPR000571">
    <property type="entry name" value="Znf_CCCH"/>
</dbReference>
<dbReference type="InterPro" id="IPR036855">
    <property type="entry name" value="Znf_CCCH_sf"/>
</dbReference>
<dbReference type="InterPro" id="IPR001878">
    <property type="entry name" value="Znf_CCHC"/>
</dbReference>
<dbReference type="InterPro" id="IPR036875">
    <property type="entry name" value="Znf_CCHC_sf"/>
</dbReference>
<dbReference type="PANTHER" id="PTHR23102:SF24">
    <property type="entry name" value="CLEAVAGE AND POLYADENYLATION SPECIFICITY FACTOR SUBUNIT 4"/>
    <property type="match status" value="1"/>
</dbReference>
<dbReference type="PANTHER" id="PTHR23102">
    <property type="entry name" value="CLEAVAGE AND POLYADENYLATION SPECIFICITY FACTOR SUBUNIT 4-RELATED"/>
    <property type="match status" value="1"/>
</dbReference>
<dbReference type="Pfam" id="PF00098">
    <property type="entry name" value="zf-CCHC"/>
    <property type="match status" value="1"/>
</dbReference>
<dbReference type="SMART" id="SM00343">
    <property type="entry name" value="ZnF_C2HC"/>
    <property type="match status" value="1"/>
</dbReference>
<dbReference type="SMART" id="SM00356">
    <property type="entry name" value="ZnF_C3H1"/>
    <property type="match status" value="4"/>
</dbReference>
<dbReference type="SUPFAM" id="SSF90229">
    <property type="entry name" value="CCCH zinc finger"/>
    <property type="match status" value="2"/>
</dbReference>
<dbReference type="SUPFAM" id="SSF57756">
    <property type="entry name" value="Retrovirus zinc finger-like domains"/>
    <property type="match status" value="1"/>
</dbReference>
<dbReference type="PROSITE" id="PS50103">
    <property type="entry name" value="ZF_C3H1"/>
    <property type="match status" value="5"/>
</dbReference>
<dbReference type="PROSITE" id="PS50158">
    <property type="entry name" value="ZF_CCHC"/>
    <property type="match status" value="1"/>
</dbReference>
<sequence length="332" mass="37321">MAAASNSAPLDPKLGRAADFVRPDFHQVNLDLENYLKTERNFKLDADQQICPLSITPLGCPLPPSQCPYRHTTPSQLNFKPPPPLPAHPREREKKLTVCKHYLRNLCKMGDNCEYTHDFNLRTMPVCIWFVKQGKCELGGECLYFHPRDRRVECPDYNRGFCVLGPNCPRKHIRRRLCDAYAAGFCPDGKDCKLAHPSPNRPPAESYINPIPPDPEAFNGPPPQLPAGYGRWREYKYDPNAVVVPAAAWVEGGSLSGWRAGGFLSANARRDNQRNRDNDDEGGRGSGGERKGGWQKDLSTVLCFRCNQYGHFANNCPNQYVPGDRGGGRRRE</sequence>
<comment type="function">
    <text evidence="1">Component of the cleavage factor I (CF I) involved in pre-mRNA 3'-end processing.</text>
</comment>
<comment type="subcellular location">
    <subcellularLocation>
        <location evidence="1">Nucleus</location>
    </subcellularLocation>
</comment>
<comment type="similarity">
    <text evidence="5">Belongs to the CPSF4/YTH1 family.</text>
</comment>
<gene>
    <name type="primary">YTH1</name>
    <name type="ordered locus">CNB01070</name>
</gene>
<reference key="1">
    <citation type="journal article" date="2005" name="Science">
        <title>The genome of the basidiomycetous yeast and human pathogen Cryptococcus neoformans.</title>
        <authorList>
            <person name="Loftus B.J."/>
            <person name="Fung E."/>
            <person name="Roncaglia P."/>
            <person name="Rowley D."/>
            <person name="Amedeo P."/>
            <person name="Bruno D."/>
            <person name="Vamathevan J."/>
            <person name="Miranda M."/>
            <person name="Anderson I.J."/>
            <person name="Fraser J.A."/>
            <person name="Allen J.E."/>
            <person name="Bosdet I.E."/>
            <person name="Brent M.R."/>
            <person name="Chiu R."/>
            <person name="Doering T.L."/>
            <person name="Donlin M.J."/>
            <person name="D'Souza C.A."/>
            <person name="Fox D.S."/>
            <person name="Grinberg V."/>
            <person name="Fu J."/>
            <person name="Fukushima M."/>
            <person name="Haas B.J."/>
            <person name="Huang J.C."/>
            <person name="Janbon G."/>
            <person name="Jones S.J.M."/>
            <person name="Koo H.L."/>
            <person name="Krzywinski M.I."/>
            <person name="Kwon-Chung K.J."/>
            <person name="Lengeler K.B."/>
            <person name="Maiti R."/>
            <person name="Marra M.A."/>
            <person name="Marra R.E."/>
            <person name="Mathewson C.A."/>
            <person name="Mitchell T.G."/>
            <person name="Pertea M."/>
            <person name="Riggs F.R."/>
            <person name="Salzberg S.L."/>
            <person name="Schein J.E."/>
            <person name="Shvartsbeyn A."/>
            <person name="Shin H."/>
            <person name="Shumway M."/>
            <person name="Specht C.A."/>
            <person name="Suh B.B."/>
            <person name="Tenney A."/>
            <person name="Utterback T.R."/>
            <person name="Wickes B.L."/>
            <person name="Wortman J.R."/>
            <person name="Wye N.H."/>
            <person name="Kronstad J.W."/>
            <person name="Lodge J.K."/>
            <person name="Heitman J."/>
            <person name="Davis R.W."/>
            <person name="Fraser C.M."/>
            <person name="Hyman R.W."/>
        </authorList>
    </citation>
    <scope>NUCLEOTIDE SEQUENCE [LARGE SCALE GENOMIC DNA]</scope>
    <source>
        <strain>JEC21 / ATCC MYA-565</strain>
    </source>
</reference>
<evidence type="ECO:0000250" key="1"/>
<evidence type="ECO:0000255" key="2">
    <source>
        <dbReference type="PROSITE-ProRule" id="PRU00047"/>
    </source>
</evidence>
<evidence type="ECO:0000255" key="3">
    <source>
        <dbReference type="PROSITE-ProRule" id="PRU00723"/>
    </source>
</evidence>
<evidence type="ECO:0000256" key="4">
    <source>
        <dbReference type="SAM" id="MobiDB-lite"/>
    </source>
</evidence>
<evidence type="ECO:0000305" key="5"/>
<accession>P0CS64</accession>
<accession>Q55X98</accession>
<accession>Q5KMN5</accession>
<name>YTH1_CRYNJ</name>